<protein>
    <recommendedName>
        <fullName>PDZ and LIM domain protein 7</fullName>
    </recommendedName>
    <alternativeName>
        <fullName>LIM mineralization protein</fullName>
        <shortName>LMP</shortName>
    </alternativeName>
    <alternativeName>
        <fullName>Protein enigma</fullName>
    </alternativeName>
</protein>
<feature type="chain" id="PRO_0000075883" description="PDZ and LIM domain protein 7">
    <location>
        <begin position="1"/>
        <end position="457"/>
    </location>
</feature>
<feature type="domain" description="PDZ" evidence="4">
    <location>
        <begin position="1"/>
        <end position="85"/>
    </location>
</feature>
<feature type="domain" description="LIM zinc-binding 1" evidence="3">
    <location>
        <begin position="280"/>
        <end position="338"/>
    </location>
</feature>
<feature type="domain" description="LIM zinc-binding 2" evidence="3">
    <location>
        <begin position="339"/>
        <end position="398"/>
    </location>
</feature>
<feature type="domain" description="LIM zinc-binding 3" evidence="3">
    <location>
        <begin position="399"/>
        <end position="457"/>
    </location>
</feature>
<feature type="region of interest" description="Disordered" evidence="5">
    <location>
        <begin position="81"/>
        <end position="132"/>
    </location>
</feature>
<feature type="region of interest" description="Disordered" evidence="5">
    <location>
        <begin position="186"/>
        <end position="226"/>
    </location>
</feature>
<feature type="modified residue" description="Phosphoserine" evidence="2">
    <location>
        <position position="78"/>
    </location>
</feature>
<feature type="modified residue" description="Phosphothreonine" evidence="8">
    <location>
        <position position="96"/>
    </location>
</feature>
<feature type="modified residue" description="Asymmetric dimethylarginine" evidence="2">
    <location>
        <position position="103"/>
    </location>
</feature>
<feature type="modified residue" description="Phosphoserine" evidence="2">
    <location>
        <position position="111"/>
    </location>
</feature>
<feature type="modified residue" description="Phosphoserine" evidence="2">
    <location>
        <position position="247"/>
    </location>
</feature>
<gene>
    <name type="primary">Pdlim7</name>
    <name type="synonym">Enigma</name>
    <name type="synonym">Lim1</name>
</gene>
<evidence type="ECO:0000250" key="1"/>
<evidence type="ECO:0000250" key="2">
    <source>
        <dbReference type="UniProtKB" id="Q9NR12"/>
    </source>
</evidence>
<evidence type="ECO:0000255" key="3">
    <source>
        <dbReference type="PROSITE-ProRule" id="PRU00125"/>
    </source>
</evidence>
<evidence type="ECO:0000255" key="4">
    <source>
        <dbReference type="PROSITE-ProRule" id="PRU00143"/>
    </source>
</evidence>
<evidence type="ECO:0000256" key="5">
    <source>
        <dbReference type="SAM" id="MobiDB-lite"/>
    </source>
</evidence>
<evidence type="ECO:0000269" key="6">
    <source>
    </source>
</evidence>
<evidence type="ECO:0000269" key="7">
    <source>
    </source>
</evidence>
<evidence type="ECO:0007744" key="8">
    <source>
    </source>
</evidence>
<sequence length="457" mass="49913">MDSFKVVLEGPAPWGFRLQGGKDFNVPLSISRLTPGGKAAQAGVAVGDWVLSIDGENAGSLTHIEAQNKIRACGERLSLGLSRAQPAQSKPQKALTPPADPPRYTFAPSASLNKTARPFGAPPPTDSALSQNGQLLRQLVPDASKQRLMENTEDWRPRPGTGQSRSFRILAHLTGTEFMQDPDEEFMKKSSQVPRTEAPAPASTIPQESWPGPTTPSPTSRPPWAVDPAFAERYAPDKTSTVLTRHSQPATPTPLQNRTSIVQAAAGGGTGGGSNNGKTPVCHQCHKIIRGRYLVALGHAYHPEEFVCSQCGKVLEEGGFFEEKGAIFCPSCYDVRYAPSCAKCKKKITGEIMHALKMTWHVPCFTCAACKTPIRNRAFYMEEGAPYCERDYEKMFGTKCRGCDFKIDAGDRFLEALGFSWHDTCFVCAICQINLEGKTFYSKKDKPLCKSHAFSHV</sequence>
<accession>Q9Z1Z9</accession>
<name>PDLI7_RAT</name>
<dbReference type="EMBL" id="AF095585">
    <property type="protein sequence ID" value="AAD13197.1"/>
    <property type="molecule type" value="mRNA"/>
</dbReference>
<dbReference type="EMBL" id="BC078693">
    <property type="protein sequence ID" value="AAH78693.1"/>
    <property type="molecule type" value="mRNA"/>
</dbReference>
<dbReference type="RefSeq" id="NP_775148.1">
    <property type="nucleotide sequence ID" value="NM_173125.2"/>
</dbReference>
<dbReference type="RefSeq" id="XP_017455959.1">
    <property type="nucleotide sequence ID" value="XM_017600470.1"/>
</dbReference>
<dbReference type="RefSeq" id="XP_063132194.1">
    <property type="nucleotide sequence ID" value="XM_063276124.1"/>
</dbReference>
<dbReference type="FunCoup" id="Q9Z1Z9">
    <property type="interactions" value="957"/>
</dbReference>
<dbReference type="IntAct" id="Q9Z1Z9">
    <property type="interactions" value="1"/>
</dbReference>
<dbReference type="STRING" id="10116.ENSRNOP00000018899"/>
<dbReference type="GlyGen" id="Q9Z1Z9">
    <property type="glycosylation" value="4 sites, 1 O-linked glycan (2 sites)"/>
</dbReference>
<dbReference type="iPTMnet" id="Q9Z1Z9"/>
<dbReference type="PhosphoSitePlus" id="Q9Z1Z9"/>
<dbReference type="jPOST" id="Q9Z1Z9"/>
<dbReference type="PaxDb" id="10116-ENSRNOP00000018899"/>
<dbReference type="GeneID" id="286908"/>
<dbReference type="KEGG" id="rno:286908"/>
<dbReference type="UCSC" id="RGD:628769">
    <property type="organism name" value="rat"/>
</dbReference>
<dbReference type="AGR" id="RGD:628769"/>
<dbReference type="CTD" id="9260"/>
<dbReference type="RGD" id="628769">
    <property type="gene designation" value="Pdlim7"/>
</dbReference>
<dbReference type="VEuPathDB" id="HostDB:ENSRNOG00000013653"/>
<dbReference type="eggNOG" id="KOG1703">
    <property type="taxonomic scope" value="Eukaryota"/>
</dbReference>
<dbReference type="HOGENOM" id="CLU_001357_8_1_1"/>
<dbReference type="InParanoid" id="Q9Z1Z9"/>
<dbReference type="PhylomeDB" id="Q9Z1Z9"/>
<dbReference type="TreeFam" id="TF106408"/>
<dbReference type="Reactome" id="R-RNO-8853659">
    <property type="pathway name" value="RET signaling"/>
</dbReference>
<dbReference type="PRO" id="PR:Q9Z1Z9"/>
<dbReference type="Proteomes" id="UP000002494">
    <property type="component" value="Chromosome 17"/>
</dbReference>
<dbReference type="Bgee" id="ENSRNOG00000013653">
    <property type="expression patterns" value="Expressed in quadriceps femoris and 19 other cell types or tissues"/>
</dbReference>
<dbReference type="GO" id="GO:0005912">
    <property type="term" value="C:adherens junction"/>
    <property type="evidence" value="ECO:0000266"/>
    <property type="project" value="RGD"/>
</dbReference>
<dbReference type="GO" id="GO:0005737">
    <property type="term" value="C:cytoplasm"/>
    <property type="evidence" value="ECO:0000266"/>
    <property type="project" value="RGD"/>
</dbReference>
<dbReference type="GO" id="GO:0031941">
    <property type="term" value="C:filamentous actin"/>
    <property type="evidence" value="ECO:0000318"/>
    <property type="project" value="GO_Central"/>
</dbReference>
<dbReference type="GO" id="GO:0001726">
    <property type="term" value="C:ruffle"/>
    <property type="evidence" value="ECO:0000266"/>
    <property type="project" value="RGD"/>
</dbReference>
<dbReference type="GO" id="GO:0001725">
    <property type="term" value="C:stress fiber"/>
    <property type="evidence" value="ECO:0000266"/>
    <property type="project" value="RGD"/>
</dbReference>
<dbReference type="GO" id="GO:0030018">
    <property type="term" value="C:Z disc"/>
    <property type="evidence" value="ECO:0000318"/>
    <property type="project" value="GO_Central"/>
</dbReference>
<dbReference type="GO" id="GO:0003779">
    <property type="term" value="F:actin binding"/>
    <property type="evidence" value="ECO:0000318"/>
    <property type="project" value="GO_Central"/>
</dbReference>
<dbReference type="GO" id="GO:0046872">
    <property type="term" value="F:metal ion binding"/>
    <property type="evidence" value="ECO:0007669"/>
    <property type="project" value="UniProtKB-KW"/>
</dbReference>
<dbReference type="GO" id="GO:0051371">
    <property type="term" value="F:muscle alpha-actinin binding"/>
    <property type="evidence" value="ECO:0000318"/>
    <property type="project" value="GO_Central"/>
</dbReference>
<dbReference type="GO" id="GO:0030036">
    <property type="term" value="P:actin cytoskeleton organization"/>
    <property type="evidence" value="ECO:0000266"/>
    <property type="project" value="RGD"/>
</dbReference>
<dbReference type="GO" id="GO:0030154">
    <property type="term" value="P:cell differentiation"/>
    <property type="evidence" value="ECO:0007669"/>
    <property type="project" value="UniProtKB-KW"/>
</dbReference>
<dbReference type="GO" id="GO:0007507">
    <property type="term" value="P:heart development"/>
    <property type="evidence" value="ECO:0000318"/>
    <property type="project" value="GO_Central"/>
</dbReference>
<dbReference type="GO" id="GO:0061061">
    <property type="term" value="P:muscle structure development"/>
    <property type="evidence" value="ECO:0000318"/>
    <property type="project" value="GO_Central"/>
</dbReference>
<dbReference type="GO" id="GO:0001503">
    <property type="term" value="P:ossification"/>
    <property type="evidence" value="ECO:0007669"/>
    <property type="project" value="UniProtKB-KW"/>
</dbReference>
<dbReference type="GO" id="GO:0045669">
    <property type="term" value="P:positive regulation of osteoblast differentiation"/>
    <property type="evidence" value="ECO:0000314"/>
    <property type="project" value="RGD"/>
</dbReference>
<dbReference type="CDD" id="cd09452">
    <property type="entry name" value="LIM1_Enigma"/>
    <property type="match status" value="1"/>
</dbReference>
<dbReference type="CDD" id="cd09456">
    <property type="entry name" value="LIM2_Enigma"/>
    <property type="match status" value="1"/>
</dbReference>
<dbReference type="CDD" id="cd09458">
    <property type="entry name" value="LIM3_Enigma"/>
    <property type="match status" value="1"/>
</dbReference>
<dbReference type="CDD" id="cd06753">
    <property type="entry name" value="PDZ_PDLIM-like"/>
    <property type="match status" value="1"/>
</dbReference>
<dbReference type="FunFam" id="2.30.42.10:FF:000019">
    <property type="entry name" value="LIM domain binding 3 isoform 1"/>
    <property type="match status" value="1"/>
</dbReference>
<dbReference type="FunFam" id="2.10.110.10:FF:000010">
    <property type="entry name" value="PDZ and LIM domain protein 5"/>
    <property type="match status" value="1"/>
</dbReference>
<dbReference type="FunFam" id="2.10.110.10:FF:000014">
    <property type="entry name" value="PDZ and LIM domain protein 5"/>
    <property type="match status" value="1"/>
</dbReference>
<dbReference type="FunFam" id="2.10.110.10:FF:000020">
    <property type="entry name" value="PDZ and LIM domain protein 5"/>
    <property type="match status" value="1"/>
</dbReference>
<dbReference type="Gene3D" id="2.30.42.10">
    <property type="match status" value="1"/>
</dbReference>
<dbReference type="Gene3D" id="2.10.110.10">
    <property type="entry name" value="Cysteine Rich Protein"/>
    <property type="match status" value="3"/>
</dbReference>
<dbReference type="InterPro" id="IPR001478">
    <property type="entry name" value="PDZ"/>
</dbReference>
<dbReference type="InterPro" id="IPR050604">
    <property type="entry name" value="PDZ-LIM_domain"/>
</dbReference>
<dbReference type="InterPro" id="IPR036034">
    <property type="entry name" value="PDZ_sf"/>
</dbReference>
<dbReference type="InterPro" id="IPR001781">
    <property type="entry name" value="Znf_LIM"/>
</dbReference>
<dbReference type="PANTHER" id="PTHR24214:SF0">
    <property type="entry name" value="PDZ AND LIM DOMAIN PROTEIN 7"/>
    <property type="match status" value="1"/>
</dbReference>
<dbReference type="PANTHER" id="PTHR24214">
    <property type="entry name" value="PDZ AND LIM DOMAIN PROTEIN ZASP"/>
    <property type="match status" value="1"/>
</dbReference>
<dbReference type="Pfam" id="PF00412">
    <property type="entry name" value="LIM"/>
    <property type="match status" value="3"/>
</dbReference>
<dbReference type="Pfam" id="PF00595">
    <property type="entry name" value="PDZ"/>
    <property type="match status" value="1"/>
</dbReference>
<dbReference type="SMART" id="SM00132">
    <property type="entry name" value="LIM"/>
    <property type="match status" value="3"/>
</dbReference>
<dbReference type="SMART" id="SM00228">
    <property type="entry name" value="PDZ"/>
    <property type="match status" value="1"/>
</dbReference>
<dbReference type="SUPFAM" id="SSF57716">
    <property type="entry name" value="Glucocorticoid receptor-like (DNA-binding domain)"/>
    <property type="match status" value="4"/>
</dbReference>
<dbReference type="SUPFAM" id="SSF50156">
    <property type="entry name" value="PDZ domain-like"/>
    <property type="match status" value="1"/>
</dbReference>
<dbReference type="PROSITE" id="PS00478">
    <property type="entry name" value="LIM_DOMAIN_1"/>
    <property type="match status" value="2"/>
</dbReference>
<dbReference type="PROSITE" id="PS50023">
    <property type="entry name" value="LIM_DOMAIN_2"/>
    <property type="match status" value="3"/>
</dbReference>
<dbReference type="PROSITE" id="PS50106">
    <property type="entry name" value="PDZ"/>
    <property type="match status" value="1"/>
</dbReference>
<proteinExistence type="evidence at protein level"/>
<keyword id="KW-0963">Cytoplasm</keyword>
<keyword id="KW-0206">Cytoskeleton</keyword>
<keyword id="KW-0217">Developmental protein</keyword>
<keyword id="KW-0221">Differentiation</keyword>
<keyword id="KW-0440">LIM domain</keyword>
<keyword id="KW-0479">Metal-binding</keyword>
<keyword id="KW-0488">Methylation</keyword>
<keyword id="KW-0892">Osteogenesis</keyword>
<keyword id="KW-0597">Phosphoprotein</keyword>
<keyword id="KW-1185">Reference proteome</keyword>
<keyword id="KW-0677">Repeat</keyword>
<keyword id="KW-0862">Zinc</keyword>
<reference key="1">
    <citation type="journal article" date="1998" name="Endocrinology">
        <title>LMP-1, a LIM-domain protein, mediates BMP-6 effects on bone formation.</title>
        <authorList>
            <person name="Boden S.D."/>
            <person name="Liu Y."/>
            <person name="Hair G.A."/>
            <person name="Helms J.A."/>
            <person name="Hu D."/>
            <person name="Racine M."/>
            <person name="Nanes M.S."/>
            <person name="Titus L."/>
        </authorList>
    </citation>
    <scope>NUCLEOTIDE SEQUENCE [MRNA]</scope>
    <scope>FUNCTION IN BONE FORMATION</scope>
    <scope>TISSUE SPECIFICITY</scope>
    <scope>DEVELOPMENTAL STAGE</scope>
    <source>
        <tissue>Bone</tissue>
    </source>
</reference>
<reference key="2">
    <citation type="journal article" date="2004" name="Genome Res.">
        <title>The status, quality, and expansion of the NIH full-length cDNA project: the Mammalian Gene Collection (MGC).</title>
        <authorList>
            <consortium name="The MGC Project Team"/>
        </authorList>
    </citation>
    <scope>NUCLEOTIDE SEQUENCE [LARGE SCALE MRNA]</scope>
    <source>
        <tissue>Lung</tissue>
    </source>
</reference>
<reference key="3">
    <citation type="journal article" date="2010" name="Mol. Cell. Neurosci.">
        <title>Postsynaptic PDLIM5/Enigma homolog binds SPAR and causes dendritic spine shrinkage.</title>
        <authorList>
            <person name="Herrick S."/>
            <person name="Evers D.M."/>
            <person name="Lee J.Y."/>
            <person name="Udagawa N."/>
            <person name="Pak D.T."/>
        </authorList>
    </citation>
    <scope>INTERACTION WITH SIPA1L1</scope>
    <scope>SUBCELLULAR LOCATION</scope>
</reference>
<reference key="4">
    <citation type="journal article" date="2012" name="Nat. Commun.">
        <title>Quantitative maps of protein phosphorylation sites across 14 different rat organs and tissues.</title>
        <authorList>
            <person name="Lundby A."/>
            <person name="Secher A."/>
            <person name="Lage K."/>
            <person name="Nordsborg N.B."/>
            <person name="Dmytriyev A."/>
            <person name="Lundby C."/>
            <person name="Olsen J.V."/>
        </authorList>
    </citation>
    <scope>PHOSPHORYLATION [LARGE SCALE ANALYSIS] AT THR-96</scope>
    <scope>IDENTIFICATION BY MASS SPECTROMETRY [LARGE SCALE ANALYSIS]</scope>
</reference>
<comment type="function">
    <text evidence="7">May function as a scaffold on which the coordinated assembly of proteins can occur. May play a role as an adapter that, via its PDZ domain, localizes LIM-binding proteins to actin filaments of both skeletal muscle and nonmuscle tissues. Involved in both of the two fundamental mechanisms of bone formation, direct bone formation (e.g. embryonic flat bones mandible and cranium), and endochondral bone formation (e.g. embryonic long bone development). Plays a role during fracture repair. Involved in BMP6 signaling pathway.</text>
</comment>
<comment type="subunit">
    <text evidence="1 6">Binds via its LIM zinc-binding 3 domain (LIM 3) domain to endocytic codes of INSR, but not with those of IGF1R, LDLR, TFRC, or EGFR. Interacts with various PKC isoforms through the LIM zinc-binding domains. Binds to RET in a phosphorylation-independent manner via its LIM zinc-binding 2 domain (LIM 2). Probably part of a complex with SHC and the RET dimer. Interacts with TPM2, TBX4 and TBX5 (By similarity). Interacts (via LIM domains) with SIPA1L1.</text>
</comment>
<comment type="subcellular location">
    <subcellularLocation>
        <location evidence="6">Cytoplasm</location>
    </subcellularLocation>
    <subcellularLocation>
        <location evidence="1">Cytoplasm</location>
        <location evidence="1">Cytoskeleton</location>
    </subcellularLocation>
    <text evidence="1">Colocalizes with RET to the cell periphery and in some cytoskeletal components. Colocalizes with TPM2 near the Z line in muscle. Colocalizes with TBX4 and TBX5 to actin filaments (By similarity).</text>
</comment>
<comment type="tissue specificity">
    <text evidence="7">Expressed in kidney, heart, brain, lung, and skeletal muscle. Overexpression results in the synthesis of an unidentified soluble factor which acts on cells in the osteoblast lineage causing them to differentiate and secrete BMP-2.</text>
</comment>
<comment type="developmental stage">
    <text evidence="7">At 14 dpc expressed in mesenchymal tissue surrounding the cartilaginous anlage of immature bones, and in the future joint spaces. As endochondral ossification progresses, and the hypertrophic cartilage zone is replaced by mineralized bone, expression appears in the mineralizing portion of the bone. Expressed in mesoderm derived bones of the skull base and neural crest-derived endochondral bones such as the proximal mandible.</text>
</comment>
<comment type="induction">
    <text>Induced by glucocorticoid or BMP6.</text>
</comment>
<comment type="domain">
    <text evidence="1">The LIM zinc-binding 2 (LIM 2) interacts with TBX4.</text>
</comment>
<comment type="domain">
    <text evidence="1">The LIM zinc-binding 3 (LIM 3) domain provides the structural basis for recognition of tyrosine-containing tight turn structures. This domain is necessary and sufficient for interaction with TBX5 (By similarity).</text>
</comment>
<comment type="domain">
    <text evidence="1">Anchored to cell periphery via its N-terminal PDZ domain.</text>
</comment>
<organism>
    <name type="scientific">Rattus norvegicus</name>
    <name type="common">Rat</name>
    <dbReference type="NCBI Taxonomy" id="10116"/>
    <lineage>
        <taxon>Eukaryota</taxon>
        <taxon>Metazoa</taxon>
        <taxon>Chordata</taxon>
        <taxon>Craniata</taxon>
        <taxon>Vertebrata</taxon>
        <taxon>Euteleostomi</taxon>
        <taxon>Mammalia</taxon>
        <taxon>Eutheria</taxon>
        <taxon>Euarchontoglires</taxon>
        <taxon>Glires</taxon>
        <taxon>Rodentia</taxon>
        <taxon>Myomorpha</taxon>
        <taxon>Muroidea</taxon>
        <taxon>Muridae</taxon>
        <taxon>Murinae</taxon>
        <taxon>Rattus</taxon>
    </lineage>
</organism>